<feature type="chain" id="PRO_1000144611" description="Large ribosomal subunit protein uL23">
    <location>
        <begin position="1"/>
        <end position="98"/>
    </location>
</feature>
<accession>B2IS42</accession>
<evidence type="ECO:0000255" key="1">
    <source>
        <dbReference type="HAMAP-Rule" id="MF_01369"/>
    </source>
</evidence>
<evidence type="ECO:0000305" key="2"/>
<protein>
    <recommendedName>
        <fullName evidence="1">Large ribosomal subunit protein uL23</fullName>
    </recommendedName>
    <alternativeName>
        <fullName evidence="2">50S ribosomal protein L23</fullName>
    </alternativeName>
</protein>
<name>RL23_STRPS</name>
<organism>
    <name type="scientific">Streptococcus pneumoniae (strain CGSP14)</name>
    <dbReference type="NCBI Taxonomy" id="516950"/>
    <lineage>
        <taxon>Bacteria</taxon>
        <taxon>Bacillati</taxon>
        <taxon>Bacillota</taxon>
        <taxon>Bacilli</taxon>
        <taxon>Lactobacillales</taxon>
        <taxon>Streptococcaceae</taxon>
        <taxon>Streptococcus</taxon>
    </lineage>
</organism>
<keyword id="KW-0687">Ribonucleoprotein</keyword>
<keyword id="KW-0689">Ribosomal protein</keyword>
<keyword id="KW-0694">RNA-binding</keyword>
<keyword id="KW-0699">rRNA-binding</keyword>
<proteinExistence type="inferred from homology"/>
<dbReference type="EMBL" id="CP001033">
    <property type="protein sequence ID" value="ACB89472.1"/>
    <property type="molecule type" value="Genomic_DNA"/>
</dbReference>
<dbReference type="RefSeq" id="WP_001055347.1">
    <property type="nucleotide sequence ID" value="NC_010582.1"/>
</dbReference>
<dbReference type="SMR" id="B2IS42"/>
<dbReference type="KEGG" id="spw:SPCG_0220"/>
<dbReference type="HOGENOM" id="CLU_037562_3_2_9"/>
<dbReference type="GO" id="GO:1990904">
    <property type="term" value="C:ribonucleoprotein complex"/>
    <property type="evidence" value="ECO:0007669"/>
    <property type="project" value="UniProtKB-KW"/>
</dbReference>
<dbReference type="GO" id="GO:0005840">
    <property type="term" value="C:ribosome"/>
    <property type="evidence" value="ECO:0007669"/>
    <property type="project" value="UniProtKB-KW"/>
</dbReference>
<dbReference type="GO" id="GO:0019843">
    <property type="term" value="F:rRNA binding"/>
    <property type="evidence" value="ECO:0007669"/>
    <property type="project" value="UniProtKB-UniRule"/>
</dbReference>
<dbReference type="GO" id="GO:0003735">
    <property type="term" value="F:structural constituent of ribosome"/>
    <property type="evidence" value="ECO:0007669"/>
    <property type="project" value="InterPro"/>
</dbReference>
<dbReference type="GO" id="GO:0006412">
    <property type="term" value="P:translation"/>
    <property type="evidence" value="ECO:0007669"/>
    <property type="project" value="UniProtKB-UniRule"/>
</dbReference>
<dbReference type="FunFam" id="3.30.70.330:FF:000001">
    <property type="entry name" value="50S ribosomal protein L23"/>
    <property type="match status" value="1"/>
</dbReference>
<dbReference type="Gene3D" id="3.30.70.330">
    <property type="match status" value="1"/>
</dbReference>
<dbReference type="HAMAP" id="MF_01369_B">
    <property type="entry name" value="Ribosomal_uL23_B"/>
    <property type="match status" value="1"/>
</dbReference>
<dbReference type="InterPro" id="IPR012677">
    <property type="entry name" value="Nucleotide-bd_a/b_plait_sf"/>
</dbReference>
<dbReference type="InterPro" id="IPR013025">
    <property type="entry name" value="Ribosomal_uL23-like"/>
</dbReference>
<dbReference type="InterPro" id="IPR012678">
    <property type="entry name" value="Ribosomal_uL23/eL15/eS24_sf"/>
</dbReference>
<dbReference type="InterPro" id="IPR001014">
    <property type="entry name" value="Ribosomal_uL23_CS"/>
</dbReference>
<dbReference type="NCBIfam" id="NF004361">
    <property type="entry name" value="PRK05738.2-1"/>
    <property type="match status" value="1"/>
</dbReference>
<dbReference type="NCBIfam" id="NF004363">
    <property type="entry name" value="PRK05738.2-4"/>
    <property type="match status" value="1"/>
</dbReference>
<dbReference type="PANTHER" id="PTHR11620">
    <property type="entry name" value="60S RIBOSOMAL PROTEIN L23A"/>
    <property type="match status" value="1"/>
</dbReference>
<dbReference type="Pfam" id="PF00276">
    <property type="entry name" value="Ribosomal_L23"/>
    <property type="match status" value="1"/>
</dbReference>
<dbReference type="SUPFAM" id="SSF54189">
    <property type="entry name" value="Ribosomal proteins S24e, L23 and L15e"/>
    <property type="match status" value="1"/>
</dbReference>
<dbReference type="PROSITE" id="PS00050">
    <property type="entry name" value="RIBOSOMAL_L23"/>
    <property type="match status" value="1"/>
</dbReference>
<comment type="function">
    <text evidence="1">One of the early assembly proteins it binds 23S rRNA. One of the proteins that surrounds the polypeptide exit tunnel on the outside of the ribosome. Forms the main docking site for trigger factor binding to the ribosome.</text>
</comment>
<comment type="subunit">
    <text evidence="1">Part of the 50S ribosomal subunit. Contacts protein L29, and trigger factor when it is bound to the ribosome.</text>
</comment>
<comment type="similarity">
    <text evidence="1">Belongs to the universal ribosomal protein uL23 family.</text>
</comment>
<sequence>MNLYDVIKKPVITESSMAQLEAGKYVFEVDTRAHKLLIKQAVEAAFEGVKVANVNTINVKPKAKRVGRYTGFTNKTKKAIITLTADSKAIELFAAEAE</sequence>
<reference key="1">
    <citation type="journal article" date="2009" name="BMC Genomics">
        <title>Genome evolution driven by host adaptations results in a more virulent and antimicrobial-resistant Streptococcus pneumoniae serotype 14.</title>
        <authorList>
            <person name="Ding F."/>
            <person name="Tang P."/>
            <person name="Hsu M.-H."/>
            <person name="Cui P."/>
            <person name="Hu S."/>
            <person name="Yu J."/>
            <person name="Chiu C.-H."/>
        </authorList>
    </citation>
    <scope>NUCLEOTIDE SEQUENCE [LARGE SCALE GENOMIC DNA]</scope>
    <source>
        <strain>CGSP14</strain>
    </source>
</reference>
<gene>
    <name evidence="1" type="primary">rplW</name>
    <name type="ordered locus">SPCG_0220</name>
</gene>